<protein>
    <recommendedName>
        <fullName evidence="1">Cysteine desulfurase IscS</fullName>
        <ecNumber evidence="1">2.8.1.7</ecNumber>
    </recommendedName>
</protein>
<organism>
    <name type="scientific">Shewanella baltica (strain OS195)</name>
    <dbReference type="NCBI Taxonomy" id="399599"/>
    <lineage>
        <taxon>Bacteria</taxon>
        <taxon>Pseudomonadati</taxon>
        <taxon>Pseudomonadota</taxon>
        <taxon>Gammaproteobacteria</taxon>
        <taxon>Alteromonadales</taxon>
        <taxon>Shewanellaceae</taxon>
        <taxon>Shewanella</taxon>
    </lineage>
</organism>
<keyword id="KW-0001">2Fe-2S</keyword>
<keyword id="KW-0963">Cytoplasm</keyword>
<keyword id="KW-0408">Iron</keyword>
<keyword id="KW-0411">Iron-sulfur</keyword>
<keyword id="KW-0479">Metal-binding</keyword>
<keyword id="KW-0663">Pyridoxal phosphate</keyword>
<keyword id="KW-0808">Transferase</keyword>
<gene>
    <name evidence="1" type="primary">iscS</name>
    <name type="ordered locus">Sbal195_2502</name>
</gene>
<accession>A9L3R0</accession>
<comment type="function">
    <text evidence="1">Master enzyme that delivers sulfur to a number of partners involved in Fe-S cluster assembly, tRNA modification or cofactor biosynthesis. Catalyzes the removal of elemental sulfur atoms from cysteine to produce alanine. Functions as a sulfur delivery protein for Fe-S cluster synthesis onto IscU, an Fe-S scaffold assembly protein, as well as other S acceptor proteins.</text>
</comment>
<comment type="catalytic activity">
    <reaction evidence="1">
        <text>(sulfur carrier)-H + L-cysteine = (sulfur carrier)-SH + L-alanine</text>
        <dbReference type="Rhea" id="RHEA:43892"/>
        <dbReference type="Rhea" id="RHEA-COMP:14737"/>
        <dbReference type="Rhea" id="RHEA-COMP:14739"/>
        <dbReference type="ChEBI" id="CHEBI:29917"/>
        <dbReference type="ChEBI" id="CHEBI:35235"/>
        <dbReference type="ChEBI" id="CHEBI:57972"/>
        <dbReference type="ChEBI" id="CHEBI:64428"/>
        <dbReference type="EC" id="2.8.1.7"/>
    </reaction>
</comment>
<comment type="cofactor">
    <cofactor evidence="1">
        <name>pyridoxal 5'-phosphate</name>
        <dbReference type="ChEBI" id="CHEBI:597326"/>
    </cofactor>
</comment>
<comment type="pathway">
    <text evidence="1">Cofactor biosynthesis; iron-sulfur cluster biosynthesis.</text>
</comment>
<comment type="subunit">
    <text evidence="1">Homodimer. Forms a heterotetramer with IscU, interacts with other sulfur acceptors.</text>
</comment>
<comment type="subcellular location">
    <subcellularLocation>
        <location evidence="1">Cytoplasm</location>
    </subcellularLocation>
</comment>
<comment type="similarity">
    <text evidence="1">Belongs to the class-V pyridoxal-phosphate-dependent aminotransferase family. NifS/IscS subfamily.</text>
</comment>
<feature type="chain" id="PRO_1000079211" description="Cysteine desulfurase IscS">
    <location>
        <begin position="1"/>
        <end position="404"/>
    </location>
</feature>
<feature type="active site" description="Cysteine persulfide intermediate" evidence="1">
    <location>
        <position position="328"/>
    </location>
</feature>
<feature type="binding site" evidence="1">
    <location>
        <begin position="75"/>
        <end position="76"/>
    </location>
    <ligand>
        <name>pyridoxal 5'-phosphate</name>
        <dbReference type="ChEBI" id="CHEBI:597326"/>
    </ligand>
</feature>
<feature type="binding site" evidence="1">
    <location>
        <position position="155"/>
    </location>
    <ligand>
        <name>pyridoxal 5'-phosphate</name>
        <dbReference type="ChEBI" id="CHEBI:597326"/>
    </ligand>
</feature>
<feature type="binding site" evidence="1">
    <location>
        <position position="183"/>
    </location>
    <ligand>
        <name>pyridoxal 5'-phosphate</name>
        <dbReference type="ChEBI" id="CHEBI:597326"/>
    </ligand>
</feature>
<feature type="binding site" evidence="1">
    <location>
        <begin position="203"/>
        <end position="205"/>
    </location>
    <ligand>
        <name>pyridoxal 5'-phosphate</name>
        <dbReference type="ChEBI" id="CHEBI:597326"/>
    </ligand>
</feature>
<feature type="binding site" evidence="1">
    <location>
        <position position="243"/>
    </location>
    <ligand>
        <name>pyridoxal 5'-phosphate</name>
        <dbReference type="ChEBI" id="CHEBI:597326"/>
    </ligand>
</feature>
<feature type="binding site" description="via persulfide group" evidence="1">
    <location>
        <position position="328"/>
    </location>
    <ligand>
        <name>[2Fe-2S] cluster</name>
        <dbReference type="ChEBI" id="CHEBI:190135"/>
        <note>ligand shared with IscU</note>
    </ligand>
</feature>
<feature type="modified residue" description="N6-(pyridoxal phosphate)lysine" evidence="1">
    <location>
        <position position="206"/>
    </location>
</feature>
<reference key="1">
    <citation type="submission" date="2007-11" db="EMBL/GenBank/DDBJ databases">
        <title>Complete sequence of chromosome of Shewanella baltica OS195.</title>
        <authorList>
            <consortium name="US DOE Joint Genome Institute"/>
            <person name="Copeland A."/>
            <person name="Lucas S."/>
            <person name="Lapidus A."/>
            <person name="Barry K."/>
            <person name="Glavina del Rio T."/>
            <person name="Dalin E."/>
            <person name="Tice H."/>
            <person name="Pitluck S."/>
            <person name="Chain P."/>
            <person name="Malfatti S."/>
            <person name="Shin M."/>
            <person name="Vergez L."/>
            <person name="Schmutz J."/>
            <person name="Larimer F."/>
            <person name="Land M."/>
            <person name="Hauser L."/>
            <person name="Kyrpides N."/>
            <person name="Kim E."/>
            <person name="Brettar I."/>
            <person name="Rodrigues J."/>
            <person name="Konstantinidis K."/>
            <person name="Klappenbach J."/>
            <person name="Hofle M."/>
            <person name="Tiedje J."/>
            <person name="Richardson P."/>
        </authorList>
    </citation>
    <scope>NUCLEOTIDE SEQUENCE [LARGE SCALE GENOMIC DNA]</scope>
    <source>
        <strain>OS195</strain>
    </source>
</reference>
<proteinExistence type="inferred from homology"/>
<name>ISCS_SHEB9</name>
<evidence type="ECO:0000255" key="1">
    <source>
        <dbReference type="HAMAP-Rule" id="MF_00331"/>
    </source>
</evidence>
<sequence length="404" mass="44645">MKLPIYLDYAATTPVDPRVAEKMFQCMTMDGIFGNPASRSHRYGWQAEEAVDIARNQIAELINADHREIVFTSGATESNNLAIKGVAHFYHKKGKHIITSKTEHKAVLDTCRQLEREGFEVTYLEPAANGIIPMERLEAAMRDDTILVSIMHVNNEIGVIHDIDAIGELCRSKGIIFHMDAAQSAGKVPIDVQATKVDLISISGHKMYGPKGIGALYVRRKPRIRLEAQMHGGGHERGMRSGTLPTHQIVGLGEAAAIAKAEMASDDARIGALRDKLWNGIKHIEETYINGDAIERVSGSLNVSFNYVEGESLMMALKDLAVSSGSACTSASLEPSYVLRALGLNDEMAHSSIRFSIGRFTTEEEIDHAIEVITQSIDKLREMSPLWEMFKDGIDLNQVQWAHH</sequence>
<dbReference type="EC" id="2.8.1.7" evidence="1"/>
<dbReference type="EMBL" id="CP000891">
    <property type="protein sequence ID" value="ABX49670.1"/>
    <property type="molecule type" value="Genomic_DNA"/>
</dbReference>
<dbReference type="RefSeq" id="WP_006081857.1">
    <property type="nucleotide sequence ID" value="NC_009997.1"/>
</dbReference>
<dbReference type="SMR" id="A9L3R0"/>
<dbReference type="KEGG" id="sbn:Sbal195_2502"/>
<dbReference type="HOGENOM" id="CLU_003433_0_2_6"/>
<dbReference type="UniPathway" id="UPA00266"/>
<dbReference type="Proteomes" id="UP000000770">
    <property type="component" value="Chromosome"/>
</dbReference>
<dbReference type="GO" id="GO:1990221">
    <property type="term" value="C:L-cysteine desulfurase complex"/>
    <property type="evidence" value="ECO:0007669"/>
    <property type="project" value="UniProtKB-ARBA"/>
</dbReference>
<dbReference type="GO" id="GO:0051537">
    <property type="term" value="F:2 iron, 2 sulfur cluster binding"/>
    <property type="evidence" value="ECO:0007669"/>
    <property type="project" value="UniProtKB-UniRule"/>
</dbReference>
<dbReference type="GO" id="GO:0031071">
    <property type="term" value="F:cysteine desulfurase activity"/>
    <property type="evidence" value="ECO:0007669"/>
    <property type="project" value="UniProtKB-UniRule"/>
</dbReference>
<dbReference type="GO" id="GO:0046872">
    <property type="term" value="F:metal ion binding"/>
    <property type="evidence" value="ECO:0007669"/>
    <property type="project" value="UniProtKB-KW"/>
</dbReference>
<dbReference type="GO" id="GO:0030170">
    <property type="term" value="F:pyridoxal phosphate binding"/>
    <property type="evidence" value="ECO:0007669"/>
    <property type="project" value="UniProtKB-UniRule"/>
</dbReference>
<dbReference type="GO" id="GO:0044571">
    <property type="term" value="P:[2Fe-2S] cluster assembly"/>
    <property type="evidence" value="ECO:0007669"/>
    <property type="project" value="UniProtKB-UniRule"/>
</dbReference>
<dbReference type="FunFam" id="3.40.640.10:FF:000003">
    <property type="entry name" value="Cysteine desulfurase IscS"/>
    <property type="match status" value="1"/>
</dbReference>
<dbReference type="FunFam" id="3.90.1150.10:FF:000002">
    <property type="entry name" value="Cysteine desulfurase IscS"/>
    <property type="match status" value="1"/>
</dbReference>
<dbReference type="Gene3D" id="3.90.1150.10">
    <property type="entry name" value="Aspartate Aminotransferase, domain 1"/>
    <property type="match status" value="1"/>
</dbReference>
<dbReference type="Gene3D" id="3.40.640.10">
    <property type="entry name" value="Type I PLP-dependent aspartate aminotransferase-like (Major domain)"/>
    <property type="match status" value="1"/>
</dbReference>
<dbReference type="HAMAP" id="MF_00331">
    <property type="entry name" value="Cys_desulf_IscS"/>
    <property type="match status" value="1"/>
</dbReference>
<dbReference type="InterPro" id="IPR000192">
    <property type="entry name" value="Aminotrans_V_dom"/>
</dbReference>
<dbReference type="InterPro" id="IPR020578">
    <property type="entry name" value="Aminotrans_V_PyrdxlP_BS"/>
</dbReference>
<dbReference type="InterPro" id="IPR010240">
    <property type="entry name" value="Cys_deSase_IscS"/>
</dbReference>
<dbReference type="InterPro" id="IPR016454">
    <property type="entry name" value="Cysteine_dSase"/>
</dbReference>
<dbReference type="InterPro" id="IPR015424">
    <property type="entry name" value="PyrdxlP-dep_Trfase"/>
</dbReference>
<dbReference type="InterPro" id="IPR015421">
    <property type="entry name" value="PyrdxlP-dep_Trfase_major"/>
</dbReference>
<dbReference type="InterPro" id="IPR015422">
    <property type="entry name" value="PyrdxlP-dep_Trfase_small"/>
</dbReference>
<dbReference type="NCBIfam" id="TIGR02006">
    <property type="entry name" value="IscS"/>
    <property type="match status" value="1"/>
</dbReference>
<dbReference type="NCBIfam" id="NF002806">
    <property type="entry name" value="PRK02948.1"/>
    <property type="match status" value="1"/>
</dbReference>
<dbReference type="NCBIfam" id="NF010611">
    <property type="entry name" value="PRK14012.1"/>
    <property type="match status" value="1"/>
</dbReference>
<dbReference type="PANTHER" id="PTHR11601:SF34">
    <property type="entry name" value="CYSTEINE DESULFURASE"/>
    <property type="match status" value="1"/>
</dbReference>
<dbReference type="PANTHER" id="PTHR11601">
    <property type="entry name" value="CYSTEINE DESULFURYLASE FAMILY MEMBER"/>
    <property type="match status" value="1"/>
</dbReference>
<dbReference type="Pfam" id="PF00266">
    <property type="entry name" value="Aminotran_5"/>
    <property type="match status" value="1"/>
</dbReference>
<dbReference type="PIRSF" id="PIRSF005572">
    <property type="entry name" value="NifS"/>
    <property type="match status" value="1"/>
</dbReference>
<dbReference type="SUPFAM" id="SSF53383">
    <property type="entry name" value="PLP-dependent transferases"/>
    <property type="match status" value="1"/>
</dbReference>
<dbReference type="PROSITE" id="PS00595">
    <property type="entry name" value="AA_TRANSFER_CLASS_5"/>
    <property type="match status" value="1"/>
</dbReference>